<sequence>MDSVAFEDVDVNFTQEEWALLDPSQKNLYRDVMWETMRNLASIGKKWKDQNIKDHYKHRGRNLRSHMLERLYQTKDGSQRGGIFSQFANQNLSKKIPGVKLCESIVYGEVSMGQSSLNRHIKDHSGHEPKEYQEYGEKPDTRNQCWKPFSSHHSFRTHEIIHTGEKLYDCKECGKTFFSLKRIRRHIITHSGYTPYKCKVCGKAFDYPSRFRTHERSHTGEKPYECQECGKAFTCITSVRRHMIKHTGDGPYKCKVCGKPFHSLSSFQVHERIHTGEKPFKCKQCGKAFSCSPTLRIHERTHTGEKPYECKQCGKAFSYLPSLRLHERIHTGEKPFVCKQCGKAFRSASTFQIHERTHTGEKPYECKECGEAFSCIPSMRRHMIKHTGEGPYKCKVCGKPFHSLSPFRIHERTHTGEKPYVCKHCGKAFVSSTSIRIHERTHTGEKPYECKQCGKAFSYLNSFRTHEMIHTGEKPFECKRCGKAFRSSSSFRLHERTHTGQKPYHCKECGKAYSCRASFQRHMLTHAEDGPPYKCMWESL</sequence>
<dbReference type="EMBL" id="U09367">
    <property type="protein sequence ID" value="AAC50261.1"/>
    <property type="molecule type" value="mRNA"/>
</dbReference>
<dbReference type="EMBL" id="BC006421">
    <property type="protein sequence ID" value="AAH06421.1"/>
    <property type="molecule type" value="mRNA"/>
</dbReference>
<dbReference type="CCDS" id="CCDS32916.1"/>
<dbReference type="PIR" id="B57785">
    <property type="entry name" value="B57785"/>
</dbReference>
<dbReference type="RefSeq" id="NP_001334942.1">
    <property type="nucleotide sequence ID" value="NM_001348013.1"/>
</dbReference>
<dbReference type="RefSeq" id="NP_001334943.1">
    <property type="nucleotide sequence ID" value="NM_001348014.1"/>
</dbReference>
<dbReference type="RefSeq" id="NP_003428.1">
    <property type="nucleotide sequence ID" value="NM_003437.5"/>
</dbReference>
<dbReference type="RefSeq" id="XP_054177984.1">
    <property type="nucleotide sequence ID" value="XM_054322009.1"/>
</dbReference>
<dbReference type="SMR" id="P52737"/>
<dbReference type="BioGRID" id="113490">
    <property type="interactions" value="52"/>
</dbReference>
<dbReference type="FunCoup" id="P52737">
    <property type="interactions" value="162"/>
</dbReference>
<dbReference type="IntAct" id="P52737">
    <property type="interactions" value="21"/>
</dbReference>
<dbReference type="MINT" id="P52737"/>
<dbReference type="STRING" id="9606.ENSP00000344162"/>
<dbReference type="iPTMnet" id="P52737"/>
<dbReference type="PhosphoSitePlus" id="P52737"/>
<dbReference type="BioMuta" id="ZNF136"/>
<dbReference type="DMDM" id="1731412"/>
<dbReference type="jPOST" id="P52737"/>
<dbReference type="MassIVE" id="P52737"/>
<dbReference type="PaxDb" id="9606-ENSP00000344162"/>
<dbReference type="PeptideAtlas" id="P52737"/>
<dbReference type="ProteomicsDB" id="56510"/>
<dbReference type="Pumba" id="P52737"/>
<dbReference type="Antibodypedia" id="13233">
    <property type="antibodies" value="129 antibodies from 20 providers"/>
</dbReference>
<dbReference type="DNASU" id="7695"/>
<dbReference type="Ensembl" id="ENST00000343979.6">
    <property type="protein sequence ID" value="ENSP00000344162.4"/>
    <property type="gene ID" value="ENSG00000196646.12"/>
</dbReference>
<dbReference type="GeneID" id="7695"/>
<dbReference type="KEGG" id="hsa:7695"/>
<dbReference type="MANE-Select" id="ENST00000343979.6">
    <property type="protein sequence ID" value="ENSP00000344162.4"/>
    <property type="RefSeq nucleotide sequence ID" value="NM_003437.5"/>
    <property type="RefSeq protein sequence ID" value="NP_003428.1"/>
</dbReference>
<dbReference type="UCSC" id="uc002mti.4">
    <property type="organism name" value="human"/>
</dbReference>
<dbReference type="AGR" id="HGNC:12920"/>
<dbReference type="CTD" id="7695"/>
<dbReference type="DisGeNET" id="7695"/>
<dbReference type="GeneCards" id="ZNF136"/>
<dbReference type="HGNC" id="HGNC:12920">
    <property type="gene designation" value="ZNF136"/>
</dbReference>
<dbReference type="HPA" id="ENSG00000196646">
    <property type="expression patterns" value="Low tissue specificity"/>
</dbReference>
<dbReference type="MalaCards" id="ZNF136"/>
<dbReference type="MIM" id="604078">
    <property type="type" value="gene"/>
</dbReference>
<dbReference type="neXtProt" id="NX_P52737"/>
<dbReference type="OpenTargets" id="ENSG00000196646"/>
<dbReference type="PharmGKB" id="PA37508"/>
<dbReference type="VEuPathDB" id="HostDB:ENSG00000196646"/>
<dbReference type="eggNOG" id="KOG1721">
    <property type="taxonomic scope" value="Eukaryota"/>
</dbReference>
<dbReference type="GeneTree" id="ENSGT00940000164354"/>
<dbReference type="HOGENOM" id="CLU_002678_44_3_1"/>
<dbReference type="InParanoid" id="P52737"/>
<dbReference type="OMA" id="HYKHQGR"/>
<dbReference type="OrthoDB" id="4748970at2759"/>
<dbReference type="PAN-GO" id="P52737">
    <property type="GO annotations" value="4 GO annotations based on evolutionary models"/>
</dbReference>
<dbReference type="PhylomeDB" id="P52737"/>
<dbReference type="TreeFam" id="TF338854"/>
<dbReference type="PathwayCommons" id="P52737"/>
<dbReference type="Reactome" id="R-HSA-212436">
    <property type="pathway name" value="Generic Transcription Pathway"/>
</dbReference>
<dbReference type="Reactome" id="R-HSA-9843940">
    <property type="pathway name" value="Regulation of endogenous retroelements by KRAB-ZFP proteins"/>
</dbReference>
<dbReference type="SignaLink" id="P52737"/>
<dbReference type="BioGRID-ORCS" id="7695">
    <property type="hits" value="10 hits in 1180 CRISPR screens"/>
</dbReference>
<dbReference type="ChiTaRS" id="ZNF136">
    <property type="organism name" value="human"/>
</dbReference>
<dbReference type="GenomeRNAi" id="7695"/>
<dbReference type="Pharos" id="P52737">
    <property type="development level" value="Tdark"/>
</dbReference>
<dbReference type="PRO" id="PR:P52737"/>
<dbReference type="Proteomes" id="UP000005640">
    <property type="component" value="Chromosome 19"/>
</dbReference>
<dbReference type="RNAct" id="P52737">
    <property type="molecule type" value="protein"/>
</dbReference>
<dbReference type="Bgee" id="ENSG00000196646">
    <property type="expression patterns" value="Expressed in secondary oocyte and 196 other cell types or tissues"/>
</dbReference>
<dbReference type="ExpressionAtlas" id="P52737">
    <property type="expression patterns" value="baseline and differential"/>
</dbReference>
<dbReference type="GO" id="GO:0005634">
    <property type="term" value="C:nucleus"/>
    <property type="evidence" value="ECO:0000318"/>
    <property type="project" value="GO_Central"/>
</dbReference>
<dbReference type="GO" id="GO:0000981">
    <property type="term" value="F:DNA-binding transcription factor activity, RNA polymerase II-specific"/>
    <property type="evidence" value="ECO:0000318"/>
    <property type="project" value="GO_Central"/>
</dbReference>
<dbReference type="GO" id="GO:0000978">
    <property type="term" value="F:RNA polymerase II cis-regulatory region sequence-specific DNA binding"/>
    <property type="evidence" value="ECO:0000318"/>
    <property type="project" value="GO_Central"/>
</dbReference>
<dbReference type="GO" id="GO:0008270">
    <property type="term" value="F:zinc ion binding"/>
    <property type="evidence" value="ECO:0007669"/>
    <property type="project" value="UniProtKB-KW"/>
</dbReference>
<dbReference type="GO" id="GO:0000122">
    <property type="term" value="P:negative regulation of transcription by RNA polymerase II"/>
    <property type="evidence" value="ECO:0000314"/>
    <property type="project" value="ARUK-UCL"/>
</dbReference>
<dbReference type="GO" id="GO:0006357">
    <property type="term" value="P:regulation of transcription by RNA polymerase II"/>
    <property type="evidence" value="ECO:0000318"/>
    <property type="project" value="GO_Central"/>
</dbReference>
<dbReference type="CDD" id="cd07765">
    <property type="entry name" value="KRAB_A-box"/>
    <property type="match status" value="1"/>
</dbReference>
<dbReference type="FunFam" id="3.30.160.60:FF:001852">
    <property type="entry name" value="Zinc finger protein 136"/>
    <property type="match status" value="2"/>
</dbReference>
<dbReference type="FunFam" id="3.30.160.60:FF:002085">
    <property type="entry name" value="Zinc finger protein 136"/>
    <property type="match status" value="1"/>
</dbReference>
<dbReference type="FunFam" id="3.30.160.60:FF:002130">
    <property type="entry name" value="Zinc finger protein 136"/>
    <property type="match status" value="1"/>
</dbReference>
<dbReference type="FunFam" id="3.30.160.60:FF:000193">
    <property type="entry name" value="Zinc finger protein 300"/>
    <property type="match status" value="3"/>
</dbReference>
<dbReference type="FunFam" id="3.30.160.60:FF:000184">
    <property type="entry name" value="Zinc finger protein 333"/>
    <property type="match status" value="2"/>
</dbReference>
<dbReference type="FunFam" id="3.30.160.60:FF:002254">
    <property type="entry name" value="Zinc finger protein 540"/>
    <property type="match status" value="1"/>
</dbReference>
<dbReference type="FunFam" id="3.30.160.60:FF:000371">
    <property type="entry name" value="Zinc finger protein 555"/>
    <property type="match status" value="1"/>
</dbReference>
<dbReference type="FunFam" id="3.30.160.60:FF:000156">
    <property type="entry name" value="Zinc finger protein 568"/>
    <property type="match status" value="2"/>
</dbReference>
<dbReference type="FunFam" id="3.30.160.60:FF:000099">
    <property type="entry name" value="Zinc finger protein 79"/>
    <property type="match status" value="1"/>
</dbReference>
<dbReference type="Gene3D" id="6.10.140.140">
    <property type="match status" value="1"/>
</dbReference>
<dbReference type="Gene3D" id="3.30.160.60">
    <property type="entry name" value="Classic Zinc Finger"/>
    <property type="match status" value="14"/>
</dbReference>
<dbReference type="InterPro" id="IPR001909">
    <property type="entry name" value="KRAB"/>
</dbReference>
<dbReference type="InterPro" id="IPR036051">
    <property type="entry name" value="KRAB_dom_sf"/>
</dbReference>
<dbReference type="InterPro" id="IPR036236">
    <property type="entry name" value="Znf_C2H2_sf"/>
</dbReference>
<dbReference type="InterPro" id="IPR013087">
    <property type="entry name" value="Znf_C2H2_type"/>
</dbReference>
<dbReference type="PANTHER" id="PTHR24376">
    <property type="entry name" value="ZINC FINGER PROTEIN"/>
    <property type="match status" value="1"/>
</dbReference>
<dbReference type="PANTHER" id="PTHR24376:SF189">
    <property type="entry name" value="ZINC FINGER PROTEIN 544-RELATED"/>
    <property type="match status" value="1"/>
</dbReference>
<dbReference type="Pfam" id="PF01352">
    <property type="entry name" value="KRAB"/>
    <property type="match status" value="1"/>
</dbReference>
<dbReference type="Pfam" id="PF00096">
    <property type="entry name" value="zf-C2H2"/>
    <property type="match status" value="10"/>
</dbReference>
<dbReference type="Pfam" id="PF13894">
    <property type="entry name" value="zf-C2H2_4"/>
    <property type="match status" value="1"/>
</dbReference>
<dbReference type="Pfam" id="PF13912">
    <property type="entry name" value="zf-C2H2_6"/>
    <property type="match status" value="1"/>
</dbReference>
<dbReference type="SMART" id="SM00349">
    <property type="entry name" value="KRAB"/>
    <property type="match status" value="1"/>
</dbReference>
<dbReference type="SMART" id="SM00355">
    <property type="entry name" value="ZnF_C2H2"/>
    <property type="match status" value="14"/>
</dbReference>
<dbReference type="SUPFAM" id="SSF57667">
    <property type="entry name" value="beta-beta-alpha zinc fingers"/>
    <property type="match status" value="7"/>
</dbReference>
<dbReference type="SUPFAM" id="SSF109640">
    <property type="entry name" value="KRAB domain (Kruppel-associated box)"/>
    <property type="match status" value="1"/>
</dbReference>
<dbReference type="PROSITE" id="PS50805">
    <property type="entry name" value="KRAB"/>
    <property type="match status" value="1"/>
</dbReference>
<dbReference type="PROSITE" id="PS00028">
    <property type="entry name" value="ZINC_FINGER_C2H2_1"/>
    <property type="match status" value="13"/>
</dbReference>
<dbReference type="PROSITE" id="PS50157">
    <property type="entry name" value="ZINC_FINGER_C2H2_2"/>
    <property type="match status" value="14"/>
</dbReference>
<proteinExistence type="evidence at protein level"/>
<feature type="chain" id="PRO_0000047420" description="Zinc finger protein 136">
    <location>
        <begin position="1"/>
        <end position="540"/>
    </location>
</feature>
<feature type="domain" description="KRAB" evidence="2">
    <location>
        <begin position="4"/>
        <end position="90"/>
    </location>
</feature>
<feature type="zinc finger region" description="C2H2-type 1; degenerate" evidence="1">
    <location>
        <begin position="140"/>
        <end position="162"/>
    </location>
</feature>
<feature type="zinc finger region" description="C2H2-type 2" evidence="1">
    <location>
        <begin position="168"/>
        <end position="190"/>
    </location>
</feature>
<feature type="zinc finger region" description="C2H2-type 3" evidence="1">
    <location>
        <begin position="196"/>
        <end position="218"/>
    </location>
</feature>
<feature type="zinc finger region" description="C2H2-type 4" evidence="1">
    <location>
        <begin position="224"/>
        <end position="246"/>
    </location>
</feature>
<feature type="zinc finger region" description="C2H2-type 5" evidence="1">
    <location>
        <begin position="252"/>
        <end position="274"/>
    </location>
</feature>
<feature type="zinc finger region" description="C2H2-type 6" evidence="1">
    <location>
        <begin position="280"/>
        <end position="302"/>
    </location>
</feature>
<feature type="zinc finger region" description="C2H2-type 7" evidence="1">
    <location>
        <begin position="308"/>
        <end position="330"/>
    </location>
</feature>
<feature type="zinc finger region" description="C2H2-type 8" evidence="1">
    <location>
        <begin position="336"/>
        <end position="358"/>
    </location>
</feature>
<feature type="zinc finger region" description="C2H2-type 9" evidence="1">
    <location>
        <begin position="364"/>
        <end position="386"/>
    </location>
</feature>
<feature type="zinc finger region" description="C2H2-type 10" evidence="1">
    <location>
        <begin position="392"/>
        <end position="414"/>
    </location>
</feature>
<feature type="zinc finger region" description="C2H2-type 11" evidence="1">
    <location>
        <begin position="420"/>
        <end position="442"/>
    </location>
</feature>
<feature type="zinc finger region" description="C2H2-type 12" evidence="1">
    <location>
        <begin position="448"/>
        <end position="470"/>
    </location>
</feature>
<feature type="zinc finger region" description="C2H2-type 13" evidence="1">
    <location>
        <begin position="476"/>
        <end position="498"/>
    </location>
</feature>
<feature type="zinc finger region" description="C2H2-type 14" evidence="1">
    <location>
        <begin position="504"/>
        <end position="526"/>
    </location>
</feature>
<feature type="modified residue" description="Phosphoserine" evidence="4">
    <location>
        <position position="191"/>
    </location>
</feature>
<feature type="sequence variant" id="VAR_033555" description="In dbSNP:rs10425995.">
    <original>Y</original>
    <variation>C</variation>
    <location>
        <position position="107"/>
    </location>
</feature>
<accession>P52737</accession>
<comment type="function">
    <text>May be involved in transcriptional regulation as a weak repressor when alone, or a potent one when fused with a heterologous protein containing a KRAB B-domain.</text>
</comment>
<comment type="interaction">
    <interactant intactId="EBI-749129">
        <id>P52737</id>
    </interactant>
    <interactant intactId="EBI-748961">
        <id>O95273</id>
        <label>CCNDBP1</label>
    </interactant>
    <organismsDiffer>false</organismsDiffer>
    <experiments>5</experiments>
</comment>
<comment type="interaction">
    <interactant intactId="EBI-749129">
        <id>P52737</id>
    </interactant>
    <interactant intactId="EBI-739624">
        <id>Q8NHQ1</id>
        <label>CEP70</label>
    </interactant>
    <organismsDiffer>false</organismsDiffer>
    <experiments>5</experiments>
</comment>
<comment type="interaction">
    <interactant intactId="EBI-749129">
        <id>P52737</id>
    </interactant>
    <interactant intactId="EBI-750020">
        <id>P49760</id>
        <label>CLK2</label>
    </interactant>
    <organismsDiffer>false</organismsDiffer>
    <experiments>3</experiments>
</comment>
<comment type="interaction">
    <interactant intactId="EBI-749129">
        <id>P52737</id>
    </interactant>
    <interactant intactId="EBI-724076">
        <id>Q99750</id>
        <label>MDFI</label>
    </interactant>
    <organismsDiffer>false</organismsDiffer>
    <experiments>12</experiments>
</comment>
<comment type="interaction">
    <interactant intactId="EBI-749129">
        <id>P52737</id>
    </interactant>
    <interactant intactId="EBI-742948">
        <id>Q5JR59</id>
        <label>MTUS2</label>
    </interactant>
    <organismsDiffer>false</organismsDiffer>
    <experiments>4</experiments>
</comment>
<comment type="interaction">
    <interactant intactId="EBI-749129">
        <id>P52737</id>
    </interactant>
    <interactant intactId="EBI-11522433">
        <id>Q5JR59-3</id>
        <label>MTUS2</label>
    </interactant>
    <organismsDiffer>false</organismsDiffer>
    <experiments>4</experiments>
</comment>
<comment type="interaction">
    <interactant intactId="EBI-749129">
        <id>P52737</id>
    </interactant>
    <interactant intactId="EBI-712466">
        <id>Q16623</id>
        <label>STX1A</label>
    </interactant>
    <organismsDiffer>false</organismsDiffer>
    <experiments>3</experiments>
</comment>
<comment type="interaction">
    <interactant intactId="EBI-749129">
        <id>P52737</id>
    </interactant>
    <interactant intactId="EBI-78139">
        <id>Q13263</id>
        <label>TRIM28</label>
    </interactant>
    <organismsDiffer>false</organismsDiffer>
    <experiments>2</experiments>
</comment>
<comment type="subcellular location">
    <subcellularLocation>
        <location evidence="3">Nucleus</location>
    </subcellularLocation>
</comment>
<comment type="tissue specificity">
    <text>Seems ubiquitous. Seen in the heart, brain, placenta, lung, liver, skeletal muscle, kidney and pancreas.</text>
</comment>
<comment type="similarity">
    <text evidence="3">Belongs to the krueppel C2H2-type zinc-finger protein family.</text>
</comment>
<name>ZN136_HUMAN</name>
<keyword id="KW-0238">DNA-binding</keyword>
<keyword id="KW-0479">Metal-binding</keyword>
<keyword id="KW-0539">Nucleus</keyword>
<keyword id="KW-0597">Phosphoprotein</keyword>
<keyword id="KW-1267">Proteomics identification</keyword>
<keyword id="KW-1185">Reference proteome</keyword>
<keyword id="KW-0677">Repeat</keyword>
<keyword id="KW-0678">Repressor</keyword>
<keyword id="KW-0804">Transcription</keyword>
<keyword id="KW-0805">Transcription regulation</keyword>
<keyword id="KW-0862">Zinc</keyword>
<keyword id="KW-0863">Zinc-finger</keyword>
<reference key="1">
    <citation type="journal article" date="1995" name="FEBS Lett.">
        <title>Repression of transcriptional activity by heterologous KRAB domains present in zinc finger proteins.</title>
        <authorList>
            <person name="Vissing H."/>
            <person name="Meyer W.-K."/>
            <person name="Aagaard L."/>
            <person name="Tommerup N."/>
            <person name="Thiesen H.-J."/>
        </authorList>
    </citation>
    <scope>NUCLEOTIDE SEQUENCE [MRNA]</scope>
    <source>
        <tissue>Insulinoma</tissue>
    </source>
</reference>
<reference key="2">
    <citation type="journal article" date="1995" name="Genomics">
        <title>Isolation and fine mapping of 16 novel human zinc finger-encoding cDNAs identify putative candidate genes for developmental and malignant disorders.</title>
        <authorList>
            <person name="Tommerup N."/>
            <person name="Vissing H."/>
        </authorList>
    </citation>
    <scope>NUCLEOTIDE SEQUENCE [MRNA]</scope>
    <source>
        <tissue>Insulinoma</tissue>
    </source>
</reference>
<reference key="3">
    <citation type="journal article" date="2004" name="Genome Res.">
        <title>The status, quality, and expansion of the NIH full-length cDNA project: the Mammalian Gene Collection (MGC).</title>
        <authorList>
            <consortium name="The MGC Project Team"/>
        </authorList>
    </citation>
    <scope>NUCLEOTIDE SEQUENCE [LARGE SCALE MRNA]</scope>
    <source>
        <tissue>Lung</tissue>
    </source>
</reference>
<reference key="4">
    <citation type="journal article" date="2013" name="J. Proteome Res.">
        <title>Toward a comprehensive characterization of a human cancer cell phosphoproteome.</title>
        <authorList>
            <person name="Zhou H."/>
            <person name="Di Palma S."/>
            <person name="Preisinger C."/>
            <person name="Peng M."/>
            <person name="Polat A.N."/>
            <person name="Heck A.J."/>
            <person name="Mohammed S."/>
        </authorList>
    </citation>
    <scope>PHOSPHORYLATION [LARGE SCALE ANALYSIS] AT SER-191</scope>
    <scope>IDENTIFICATION BY MASS SPECTROMETRY [LARGE SCALE ANALYSIS]</scope>
    <source>
        <tissue>Cervix carcinoma</tissue>
    </source>
</reference>
<organism>
    <name type="scientific">Homo sapiens</name>
    <name type="common">Human</name>
    <dbReference type="NCBI Taxonomy" id="9606"/>
    <lineage>
        <taxon>Eukaryota</taxon>
        <taxon>Metazoa</taxon>
        <taxon>Chordata</taxon>
        <taxon>Craniata</taxon>
        <taxon>Vertebrata</taxon>
        <taxon>Euteleostomi</taxon>
        <taxon>Mammalia</taxon>
        <taxon>Eutheria</taxon>
        <taxon>Euarchontoglires</taxon>
        <taxon>Primates</taxon>
        <taxon>Haplorrhini</taxon>
        <taxon>Catarrhini</taxon>
        <taxon>Hominidae</taxon>
        <taxon>Homo</taxon>
    </lineage>
</organism>
<gene>
    <name type="primary">ZNF136</name>
</gene>
<evidence type="ECO:0000255" key="1">
    <source>
        <dbReference type="PROSITE-ProRule" id="PRU00042"/>
    </source>
</evidence>
<evidence type="ECO:0000255" key="2">
    <source>
        <dbReference type="PROSITE-ProRule" id="PRU00119"/>
    </source>
</evidence>
<evidence type="ECO:0000305" key="3"/>
<evidence type="ECO:0007744" key="4">
    <source>
    </source>
</evidence>
<protein>
    <recommendedName>
        <fullName>Zinc finger protein 136</fullName>
    </recommendedName>
</protein>